<name>LRC41_HUMAN</name>
<organism>
    <name type="scientific">Homo sapiens</name>
    <name type="common">Human</name>
    <dbReference type="NCBI Taxonomy" id="9606"/>
    <lineage>
        <taxon>Eukaryota</taxon>
        <taxon>Metazoa</taxon>
        <taxon>Chordata</taxon>
        <taxon>Craniata</taxon>
        <taxon>Vertebrata</taxon>
        <taxon>Euteleostomi</taxon>
        <taxon>Mammalia</taxon>
        <taxon>Eutheria</taxon>
        <taxon>Euarchontoglires</taxon>
        <taxon>Primates</taxon>
        <taxon>Haplorrhini</taxon>
        <taxon>Catarrhini</taxon>
        <taxon>Hominidae</taxon>
        <taxon>Homo</taxon>
    </lineage>
</organism>
<proteinExistence type="evidence at protein level"/>
<comment type="function">
    <text evidence="5">Probable substrate recognition component of an ECS (Elongin BC-CUL2/5-SOCS-box protein) E3 ubiquitin ligase complex which mediates the ubiquitination and subsequent proteasomal degradation of target proteins.</text>
</comment>
<comment type="pathway">
    <text>Protein modification; protein ubiquitination.</text>
</comment>
<comment type="subunit">
    <text evidence="3 5">Part of an E3 ubiquitin-protein ligase complex with Elongin BC (ELOB and ELOC), RBX1 and CUL5. Component of a probable ECS(LRRC41) complex which contains CUL5, RNF7/RBX2, Elongin BC and LRRC41. Interacts with CUL5, RNF7, ELOB and ELOC.</text>
</comment>
<comment type="interaction">
    <interactant intactId="EBI-721408">
        <id>Q15345</id>
    </interactant>
    <interactant intactId="EBI-3867333">
        <id>A8MQ03</id>
        <label>CYSRT1</label>
    </interactant>
    <organismsDiffer>false</organismsDiffer>
    <experiments>3</experiments>
</comment>
<comment type="interaction">
    <interactant intactId="EBI-721408">
        <id>Q15345</id>
    </interactant>
    <interactant intactId="EBI-750641">
        <id>Q5TD97</id>
        <label>FHL5</label>
    </interactant>
    <organismsDiffer>false</organismsDiffer>
    <experiments>3</experiments>
</comment>
<comment type="interaction">
    <interactant intactId="EBI-721408">
        <id>Q15345</id>
    </interactant>
    <interactant intactId="EBI-948001">
        <id>Q15323</id>
        <label>KRT31</label>
    </interactant>
    <organismsDiffer>false</organismsDiffer>
    <experiments>3</experiments>
</comment>
<comment type="interaction">
    <interactant intactId="EBI-721408">
        <id>Q15345</id>
    </interactant>
    <interactant intactId="EBI-1047093">
        <id>O76011</id>
        <label>KRT34</label>
    </interactant>
    <organismsDiffer>false</organismsDiffer>
    <experiments>3</experiments>
</comment>
<comment type="interaction">
    <interactant intactId="EBI-721408">
        <id>Q15345</id>
    </interactant>
    <interactant intactId="EBI-9996449">
        <id>Q9BYR8</id>
        <label>KRTAP3-1</label>
    </interactant>
    <organismsDiffer>false</organismsDiffer>
    <experiments>3</experiments>
</comment>
<comment type="interaction">
    <interactant intactId="EBI-721408">
        <id>Q15345</id>
    </interactant>
    <interactant intactId="EBI-11962084">
        <id>Q3LI66</id>
        <label>KRTAP6-2</label>
    </interactant>
    <organismsDiffer>false</organismsDiffer>
    <experiments>3</experiments>
</comment>
<comment type="interaction">
    <interactant intactId="EBI-721408">
        <id>Q15345</id>
    </interactant>
    <interactant intactId="EBI-12275818">
        <id>Q53HV7-2</id>
        <label>SMUG1</label>
    </interactant>
    <organismsDiffer>false</organismsDiffer>
    <experiments>3</experiments>
</comment>
<comment type="alternative products">
    <event type="alternative splicing"/>
    <isoform>
        <id>Q15345-2</id>
        <name>2</name>
        <sequence type="displayed"/>
    </isoform>
    <isoform>
        <id>Q15345-3</id>
        <name>3</name>
        <sequence type="described" ref="VSP_009234 VSP_009235"/>
    </isoform>
</comment>
<comment type="domain">
    <text>The Elongin BC complex binding domain is also known as BC-box with the consensus [APST]-L-x(3)-C-x(3)-[AILV].</text>
</comment>
<comment type="caution">
    <text evidence="8">It is uncertain whether Met-1 or Met-23 is the initiator.</text>
</comment>
<comment type="sequence caution" evidence="8">
    <conflict type="erroneous initiation">
        <sequence resource="EMBL-CDS" id="AAQ15266"/>
    </conflict>
    <text>Truncated N-terminus.</text>
</comment>
<comment type="sequence caution" evidence="8">
    <conflict type="frameshift">
        <sequence resource="EMBL-CDS" id="AAQ15266"/>
    </conflict>
</comment>
<comment type="sequence caution" evidence="8">
    <conflict type="frameshift">
        <sequence resource="EMBL-CDS" id="CAA60013"/>
    </conflict>
</comment>
<comment type="sequence caution" evidence="8">
    <conflict type="frameshift">
        <sequence resource="EMBL-CDS" id="CAD97609"/>
    </conflict>
</comment>
<comment type="sequence caution" evidence="8">
    <molecule>Isoform 3</molecule>
    <conflict type="erroneous initiation">
        <sequence resource="EMBL-CDS" id="BAC86308"/>
    </conflict>
    <text>Truncated N-terminus.</text>
</comment>
<comment type="sequence caution" evidence="8">
    <molecule>Isoform 3</molecule>
    <conflict type="frameshift">
        <sequence resource="EMBL-CDS" id="BAC86308"/>
    </conflict>
</comment>
<gene>
    <name type="primary">LRRC41</name>
    <name type="synonym">MUF1</name>
    <name type="ORF">PP7759</name>
</gene>
<feature type="chain" id="PRO_0000096645" description="Leucine-rich repeat-containing protein 41">
    <location>
        <begin position="1"/>
        <end position="812"/>
    </location>
</feature>
<feature type="repeat" description="LRR 1">
    <location>
        <begin position="487"/>
        <end position="507"/>
    </location>
</feature>
<feature type="repeat" description="LRR 2">
    <location>
        <begin position="518"/>
        <end position="530"/>
    </location>
</feature>
<feature type="repeat" description="LRR 3">
    <location>
        <begin position="531"/>
        <end position="555"/>
    </location>
</feature>
<feature type="repeat" description="LRR 4">
    <location>
        <begin position="613"/>
        <end position="635"/>
    </location>
</feature>
<feature type="repeat" description="LRR 5">
    <location>
        <begin position="636"/>
        <end position="659"/>
    </location>
</feature>
<feature type="repeat" description="LRR 6">
    <location>
        <begin position="701"/>
        <end position="728"/>
    </location>
</feature>
<feature type="repeat" description="LRR 7">
    <location>
        <begin position="731"/>
        <end position="752"/>
    </location>
</feature>
<feature type="region of interest" description="Interaction with Elongin BC complex" evidence="1">
    <location>
        <begin position="45"/>
        <end position="54"/>
    </location>
</feature>
<feature type="region of interest" description="Disordered" evidence="2">
    <location>
        <begin position="267"/>
        <end position="408"/>
    </location>
</feature>
<feature type="compositionally biased region" description="Low complexity" evidence="2">
    <location>
        <begin position="354"/>
        <end position="381"/>
    </location>
</feature>
<feature type="compositionally biased region" description="Basic residues" evidence="2">
    <location>
        <begin position="387"/>
        <end position="401"/>
    </location>
</feature>
<feature type="modified residue" description="Phosphoserine" evidence="12">
    <location>
        <position position="155"/>
    </location>
</feature>
<feature type="modified residue" description="Phosphoserine" evidence="9 12">
    <location>
        <position position="276"/>
    </location>
</feature>
<feature type="modified residue" description="Phosphoserine" evidence="12">
    <location>
        <position position="326"/>
    </location>
</feature>
<feature type="modified residue" description="Phosphothreonine" evidence="10 12">
    <location>
        <position position="327"/>
    </location>
</feature>
<feature type="modified residue" description="Phosphoserine" evidence="11 12">
    <location>
        <position position="357"/>
    </location>
</feature>
<feature type="modified residue" description="Phosphoserine" evidence="12">
    <location>
        <position position="373"/>
    </location>
</feature>
<feature type="splice variant" id="VSP_009234" description="In isoform 3." evidence="7">
    <original>NAGLLALADVFSED</original>
    <variation>GGQTLGRERGKELG</variation>
    <location>
        <begin position="716"/>
        <end position="729"/>
    </location>
</feature>
<feature type="splice variant" id="VSP_009235" description="In isoform 3." evidence="7">
    <location>
        <begin position="730"/>
        <end position="812"/>
    </location>
</feature>
<feature type="sequence variant" id="VAR_051117" description="In dbSNP:rs11542623." evidence="4 6">
    <original>V</original>
    <variation>I</variation>
    <location>
        <position position="609"/>
    </location>
</feature>
<feature type="sequence conflict" description="In Ref. 6; AAQ15266." evidence="8" ref="6">
    <original>E</original>
    <variation>K</variation>
    <location>
        <position position="429"/>
    </location>
</feature>
<feature type="sequence conflict" description="In Ref. 7; BAC86308." evidence="8" ref="7">
    <original>A</original>
    <variation>S</variation>
    <location>
        <position position="603"/>
    </location>
</feature>
<feature type="sequence conflict" description="In Ref. 5; CAD97609." evidence="8" ref="5">
    <original>M</original>
    <variation>I</variation>
    <location>
        <position position="654"/>
    </location>
</feature>
<accession>Q15345</accession>
<accession>A8K5G8</accession>
<accession>Q3MJ96</accession>
<accession>Q5TDF5</accession>
<accession>Q71RA8</accession>
<accession>Q9BSM0</accession>
<protein>
    <recommendedName>
        <fullName>Leucine-rich repeat-containing protein 41</fullName>
    </recommendedName>
    <alternativeName>
        <fullName>Protein Muf1</fullName>
    </alternativeName>
</protein>
<dbReference type="EMBL" id="AK125827">
    <property type="protein sequence ID" value="BAC86308.1"/>
    <property type="status" value="ALT_SEQ"/>
    <property type="molecule type" value="mRNA"/>
</dbReference>
<dbReference type="EMBL" id="AK291283">
    <property type="protein sequence ID" value="BAF83972.1"/>
    <property type="molecule type" value="mRNA"/>
</dbReference>
<dbReference type="EMBL" id="AK297596">
    <property type="protein sequence ID" value="BAG59981.1"/>
    <property type="molecule type" value="mRNA"/>
</dbReference>
<dbReference type="EMBL" id="AL121602">
    <property type="status" value="NOT_ANNOTATED_CDS"/>
    <property type="molecule type" value="Genomic_DNA"/>
</dbReference>
<dbReference type="EMBL" id="AL122001">
    <property type="status" value="NOT_ANNOTATED_CDS"/>
    <property type="molecule type" value="Genomic_DNA"/>
</dbReference>
<dbReference type="EMBL" id="CH471059">
    <property type="protein sequence ID" value="EAX06927.1"/>
    <property type="molecule type" value="Genomic_DNA"/>
</dbReference>
<dbReference type="EMBL" id="BC004953">
    <property type="protein sequence ID" value="AAH04953.2"/>
    <property type="molecule type" value="mRNA"/>
</dbReference>
<dbReference type="EMBL" id="BC101522">
    <property type="protein sequence ID" value="AAI01523.1"/>
    <property type="molecule type" value="mRNA"/>
</dbReference>
<dbReference type="EMBL" id="BC101524">
    <property type="protein sequence ID" value="AAI01525.1"/>
    <property type="molecule type" value="mRNA"/>
</dbReference>
<dbReference type="EMBL" id="BX537366">
    <property type="protein sequence ID" value="CAD97609.1"/>
    <property type="status" value="ALT_FRAME"/>
    <property type="molecule type" value="mRNA"/>
</dbReference>
<dbReference type="EMBL" id="AF370430">
    <property type="protein sequence ID" value="AAQ15266.1"/>
    <property type="status" value="ALT_SEQ"/>
    <property type="molecule type" value="mRNA"/>
</dbReference>
<dbReference type="EMBL" id="X86018">
    <property type="protein sequence ID" value="CAA60013.1"/>
    <property type="status" value="ALT_FRAME"/>
    <property type="molecule type" value="mRNA"/>
</dbReference>
<dbReference type="CCDS" id="CCDS533.1">
    <molecule id="Q15345-2"/>
</dbReference>
<dbReference type="PIR" id="S52797">
    <property type="entry name" value="S52797"/>
</dbReference>
<dbReference type="RefSeq" id="NP_006360.3">
    <molecule id="Q15345-2"/>
    <property type="nucleotide sequence ID" value="NM_006369.4"/>
</dbReference>
<dbReference type="SMR" id="Q15345"/>
<dbReference type="BioGRID" id="115752">
    <property type="interactions" value="96"/>
</dbReference>
<dbReference type="FunCoup" id="Q15345">
    <property type="interactions" value="4015"/>
</dbReference>
<dbReference type="IntAct" id="Q15345">
    <property type="interactions" value="43"/>
</dbReference>
<dbReference type="MINT" id="Q15345"/>
<dbReference type="STRING" id="9606.ENSP00000477792"/>
<dbReference type="iPTMnet" id="Q15345"/>
<dbReference type="PhosphoSitePlus" id="Q15345"/>
<dbReference type="BioMuta" id="LRRC41"/>
<dbReference type="DMDM" id="150421588"/>
<dbReference type="jPOST" id="Q15345"/>
<dbReference type="MassIVE" id="Q15345"/>
<dbReference type="PaxDb" id="9606-ENSP00000477792"/>
<dbReference type="PeptideAtlas" id="Q15345"/>
<dbReference type="ProteomicsDB" id="60534">
    <molecule id="Q15345-2"/>
</dbReference>
<dbReference type="ProteomicsDB" id="60535">
    <molecule id="Q15345-3"/>
</dbReference>
<dbReference type="Pumba" id="Q15345"/>
<dbReference type="Antibodypedia" id="32783">
    <property type="antibodies" value="135 antibodies from 28 providers"/>
</dbReference>
<dbReference type="DNASU" id="10489"/>
<dbReference type="Ensembl" id="ENST00000343304.10">
    <molecule id="Q15345-2"/>
    <property type="protein sequence ID" value="ENSP00000343298.6"/>
    <property type="gene ID" value="ENSG00000132128.18"/>
</dbReference>
<dbReference type="Ensembl" id="ENST00000617190.5">
    <molecule id="Q15345-2"/>
    <property type="protein sequence ID" value="ENSP00000477792.1"/>
    <property type="gene ID" value="ENSG00000132128.18"/>
</dbReference>
<dbReference type="GeneID" id="10489"/>
<dbReference type="KEGG" id="hsa:10489"/>
<dbReference type="MANE-Select" id="ENST00000617190.5">
    <property type="protein sequence ID" value="ENSP00000477792.1"/>
    <property type="RefSeq nucleotide sequence ID" value="NM_006369.5"/>
    <property type="RefSeq protein sequence ID" value="NP_006360.3"/>
</dbReference>
<dbReference type="UCSC" id="uc001cpn.4">
    <molecule id="Q15345-2"/>
    <property type="organism name" value="human"/>
</dbReference>
<dbReference type="AGR" id="HGNC:16917"/>
<dbReference type="CTD" id="10489"/>
<dbReference type="DisGeNET" id="10489"/>
<dbReference type="GeneCards" id="LRRC41"/>
<dbReference type="HGNC" id="HGNC:16917">
    <property type="gene designation" value="LRRC41"/>
</dbReference>
<dbReference type="HPA" id="ENSG00000132128">
    <property type="expression patterns" value="Low tissue specificity"/>
</dbReference>
<dbReference type="MIM" id="618753">
    <property type="type" value="gene"/>
</dbReference>
<dbReference type="neXtProt" id="NX_Q15345"/>
<dbReference type="OpenTargets" id="ENSG00000132128"/>
<dbReference type="PharmGKB" id="PA142671529"/>
<dbReference type="VEuPathDB" id="HostDB:ENSG00000132128"/>
<dbReference type="eggNOG" id="ENOG502R5T0">
    <property type="taxonomic scope" value="Eukaryota"/>
</dbReference>
<dbReference type="GeneTree" id="ENSGT00390000015908"/>
<dbReference type="HOGENOM" id="CLU_021836_0_0_1"/>
<dbReference type="InParanoid" id="Q15345"/>
<dbReference type="OMA" id="VVSDSWH"/>
<dbReference type="OrthoDB" id="9415738at2759"/>
<dbReference type="PAN-GO" id="Q15345">
    <property type="GO annotations" value="2 GO annotations based on evolutionary models"/>
</dbReference>
<dbReference type="PhylomeDB" id="Q15345"/>
<dbReference type="TreeFam" id="TF335481"/>
<dbReference type="PathwayCommons" id="Q15345"/>
<dbReference type="Reactome" id="R-HSA-8951664">
    <property type="pathway name" value="Neddylation"/>
</dbReference>
<dbReference type="Reactome" id="R-HSA-9706019">
    <property type="pathway name" value="RHOBTB3 ATPase cycle"/>
</dbReference>
<dbReference type="Reactome" id="R-HSA-983168">
    <property type="pathway name" value="Antigen processing: Ubiquitination &amp; Proteasome degradation"/>
</dbReference>
<dbReference type="SignaLink" id="Q15345"/>
<dbReference type="UniPathway" id="UPA00143"/>
<dbReference type="BioGRID-ORCS" id="10489">
    <property type="hits" value="32 hits in 1193 CRISPR screens"/>
</dbReference>
<dbReference type="ChiTaRS" id="LRRC41">
    <property type="organism name" value="human"/>
</dbReference>
<dbReference type="GeneWiki" id="LRRC41"/>
<dbReference type="GenomeRNAi" id="10489"/>
<dbReference type="Pharos" id="Q15345">
    <property type="development level" value="Tbio"/>
</dbReference>
<dbReference type="PRO" id="PR:Q15345"/>
<dbReference type="Proteomes" id="UP000005640">
    <property type="component" value="Chromosome 1"/>
</dbReference>
<dbReference type="RNAct" id="Q15345">
    <property type="molecule type" value="protein"/>
</dbReference>
<dbReference type="Bgee" id="ENSG00000132128">
    <property type="expression patterns" value="Expressed in right uterine tube and 203 other cell types or tissues"/>
</dbReference>
<dbReference type="ExpressionAtlas" id="Q15345">
    <property type="expression patterns" value="baseline and differential"/>
</dbReference>
<dbReference type="GO" id="GO:0005737">
    <property type="term" value="C:cytoplasm"/>
    <property type="evidence" value="ECO:0000318"/>
    <property type="project" value="GO_Central"/>
</dbReference>
<dbReference type="GO" id="GO:0005829">
    <property type="term" value="C:cytosol"/>
    <property type="evidence" value="ECO:0000304"/>
    <property type="project" value="Reactome"/>
</dbReference>
<dbReference type="GO" id="GO:0016020">
    <property type="term" value="C:membrane"/>
    <property type="evidence" value="ECO:0007005"/>
    <property type="project" value="UniProtKB"/>
</dbReference>
<dbReference type="GO" id="GO:0005634">
    <property type="term" value="C:nucleus"/>
    <property type="evidence" value="ECO:0000318"/>
    <property type="project" value="GO_Central"/>
</dbReference>
<dbReference type="GO" id="GO:0042802">
    <property type="term" value="F:identical protein binding"/>
    <property type="evidence" value="ECO:0007669"/>
    <property type="project" value="Ensembl"/>
</dbReference>
<dbReference type="GO" id="GO:0016567">
    <property type="term" value="P:protein ubiquitination"/>
    <property type="evidence" value="ECO:0007669"/>
    <property type="project" value="UniProtKB-UniPathway"/>
</dbReference>
<dbReference type="FunFam" id="3.80.10.10:FF:000114">
    <property type="entry name" value="leucine-rich repeat-containing protein 41 isoform X1"/>
    <property type="match status" value="1"/>
</dbReference>
<dbReference type="FunFam" id="3.80.10.10:FF:000088">
    <property type="entry name" value="Putative leucine-rich repeat-containing protein 41"/>
    <property type="match status" value="1"/>
</dbReference>
<dbReference type="Gene3D" id="3.80.10.10">
    <property type="entry name" value="Ribonuclease Inhibitor"/>
    <property type="match status" value="2"/>
</dbReference>
<dbReference type="InterPro" id="IPR026137">
    <property type="entry name" value="Leu_rpt_41"/>
</dbReference>
<dbReference type="InterPro" id="IPR032675">
    <property type="entry name" value="LRR_dom_sf"/>
</dbReference>
<dbReference type="PANTHER" id="PTHR15354:SF1">
    <property type="entry name" value="LEUCINE-RICH REPEAT-CONTAINING PROTEIN 41"/>
    <property type="match status" value="1"/>
</dbReference>
<dbReference type="PANTHER" id="PTHR15354">
    <property type="entry name" value="MUF1"/>
    <property type="match status" value="1"/>
</dbReference>
<dbReference type="SMART" id="SM00368">
    <property type="entry name" value="LRR_RI"/>
    <property type="match status" value="3"/>
</dbReference>
<dbReference type="SUPFAM" id="SSF52047">
    <property type="entry name" value="RNI-like"/>
    <property type="match status" value="1"/>
</dbReference>
<sequence>MAAPEAWRARSCWFCEVAAATTMEATSREAAPAKSSASGPNAPPALFELCGRAVSAHMGVLESGVWALPGPILQSILPLLNIYYLERIEETALKKGLSTQAIWRRLWDELMKTRPSSLESVTCWRAKFMEAFFSHVLRGTIDVSSDRRLCDQRFSPLLHSSRHVRQLTICNMLQGATELVAEPNRRVLETLASSLHTLKFRHLLFSDVAAQQSLRQLLHQLIHHGAVSQVSLYSWPVPESALFILILTMSAGFWQPGPGGPPCRLCGEASRGRAPSRDEGSLLLGSRRPRRDAAERCAAALMASRRKSEAKQMPRAAPATRVTRRSTQESLTAGGTDLKRELHPPATSHEAPGTKRSPSAPAATSSASSSTSSYKRAPASSAPQPKPLKRFKRAAGKKGARTRQGPGAESEDLYDFVFIVAGEKEDGEEMEIGEVACGALDGSDPSCLGLPALEASQRFRSISTLELFTVPLSTEAALTLCHLLSSWVSLESLTLSYNGLGSNIFRLLDSLRALSGQAGCRLRALHLSDLFSPLPILELTRAIVRALPLLRVLSIRVDHPSQRDNPGVPGNAGPPSHIIGDEEIPENCLEQLEMGFPRGAQPAPLLCSVLKASGSLQQLSLDSATFASPQDFGLVLQTLKEYNLALKRLSFHDMNLADCQSEVLFLLQNLTLQEITFSFCRLFEKRPAQFLPEMVAAMKGNSTLKGLRLPGNRLGNAGLLALADVFSEDSSSSLCQLDISSNCIKPDGLLEFAKRLERWGRGAFGHLRLFQNWLDQDAVTAREAIRRLRATCHVVSDSWDSSQAFADYVSTM</sequence>
<keyword id="KW-0025">Alternative splicing</keyword>
<keyword id="KW-0433">Leucine-rich repeat</keyword>
<keyword id="KW-0597">Phosphoprotein</keyword>
<keyword id="KW-1267">Proteomics identification</keyword>
<keyword id="KW-1185">Reference proteome</keyword>
<keyword id="KW-0677">Repeat</keyword>
<keyword id="KW-0833">Ubl conjugation pathway</keyword>
<evidence type="ECO:0000250" key="1"/>
<evidence type="ECO:0000256" key="2">
    <source>
        <dbReference type="SAM" id="MobiDB-lite"/>
    </source>
</evidence>
<evidence type="ECO:0000269" key="3">
    <source>
    </source>
</evidence>
<evidence type="ECO:0000269" key="4">
    <source>
    </source>
</evidence>
<evidence type="ECO:0000269" key="5">
    <source>
    </source>
</evidence>
<evidence type="ECO:0000269" key="6">
    <source>
    </source>
</evidence>
<evidence type="ECO:0000303" key="7">
    <source>
    </source>
</evidence>
<evidence type="ECO:0000305" key="8"/>
<evidence type="ECO:0007744" key="9">
    <source>
    </source>
</evidence>
<evidence type="ECO:0007744" key="10">
    <source>
    </source>
</evidence>
<evidence type="ECO:0007744" key="11">
    <source>
    </source>
</evidence>
<evidence type="ECO:0007744" key="12">
    <source>
    </source>
</evidence>
<reference key="1">
    <citation type="journal article" date="2004" name="Nat. Genet.">
        <title>Complete sequencing and characterization of 21,243 full-length human cDNAs.</title>
        <authorList>
            <person name="Ota T."/>
            <person name="Suzuki Y."/>
            <person name="Nishikawa T."/>
            <person name="Otsuki T."/>
            <person name="Sugiyama T."/>
            <person name="Irie R."/>
            <person name="Wakamatsu A."/>
            <person name="Hayashi K."/>
            <person name="Sato H."/>
            <person name="Nagai K."/>
            <person name="Kimura K."/>
            <person name="Makita H."/>
            <person name="Sekine M."/>
            <person name="Obayashi M."/>
            <person name="Nishi T."/>
            <person name="Shibahara T."/>
            <person name="Tanaka T."/>
            <person name="Ishii S."/>
            <person name="Yamamoto J."/>
            <person name="Saito K."/>
            <person name="Kawai Y."/>
            <person name="Isono Y."/>
            <person name="Nakamura Y."/>
            <person name="Nagahari K."/>
            <person name="Murakami K."/>
            <person name="Yasuda T."/>
            <person name="Iwayanagi T."/>
            <person name="Wagatsuma M."/>
            <person name="Shiratori A."/>
            <person name="Sudo H."/>
            <person name="Hosoiri T."/>
            <person name="Kaku Y."/>
            <person name="Kodaira H."/>
            <person name="Kondo H."/>
            <person name="Sugawara M."/>
            <person name="Takahashi M."/>
            <person name="Kanda K."/>
            <person name="Yokoi T."/>
            <person name="Furuya T."/>
            <person name="Kikkawa E."/>
            <person name="Omura Y."/>
            <person name="Abe K."/>
            <person name="Kamihara K."/>
            <person name="Katsuta N."/>
            <person name="Sato K."/>
            <person name="Tanikawa M."/>
            <person name="Yamazaki M."/>
            <person name="Ninomiya K."/>
            <person name="Ishibashi T."/>
            <person name="Yamashita H."/>
            <person name="Murakawa K."/>
            <person name="Fujimori K."/>
            <person name="Tanai H."/>
            <person name="Kimata M."/>
            <person name="Watanabe M."/>
            <person name="Hiraoka S."/>
            <person name="Chiba Y."/>
            <person name="Ishida S."/>
            <person name="Ono Y."/>
            <person name="Takiguchi S."/>
            <person name="Watanabe S."/>
            <person name="Yosida M."/>
            <person name="Hotuta T."/>
            <person name="Kusano J."/>
            <person name="Kanehori K."/>
            <person name="Takahashi-Fujii A."/>
            <person name="Hara H."/>
            <person name="Tanase T.-O."/>
            <person name="Nomura Y."/>
            <person name="Togiya S."/>
            <person name="Komai F."/>
            <person name="Hara R."/>
            <person name="Takeuchi K."/>
            <person name="Arita M."/>
            <person name="Imose N."/>
            <person name="Musashino K."/>
            <person name="Yuuki H."/>
            <person name="Oshima A."/>
            <person name="Sasaki N."/>
            <person name="Aotsuka S."/>
            <person name="Yoshikawa Y."/>
            <person name="Matsunawa H."/>
            <person name="Ichihara T."/>
            <person name="Shiohata N."/>
            <person name="Sano S."/>
            <person name="Moriya S."/>
            <person name="Momiyama H."/>
            <person name="Satoh N."/>
            <person name="Takami S."/>
            <person name="Terashima Y."/>
            <person name="Suzuki O."/>
            <person name="Nakagawa S."/>
            <person name="Senoh A."/>
            <person name="Mizoguchi H."/>
            <person name="Goto Y."/>
            <person name="Shimizu F."/>
            <person name="Wakebe H."/>
            <person name="Hishigaki H."/>
            <person name="Watanabe T."/>
            <person name="Sugiyama A."/>
            <person name="Takemoto M."/>
            <person name="Kawakami B."/>
            <person name="Yamazaki M."/>
            <person name="Watanabe K."/>
            <person name="Kumagai A."/>
            <person name="Itakura S."/>
            <person name="Fukuzumi Y."/>
            <person name="Fujimori Y."/>
            <person name="Komiyama M."/>
            <person name="Tashiro H."/>
            <person name="Tanigami A."/>
            <person name="Fujiwara T."/>
            <person name="Ono T."/>
            <person name="Yamada K."/>
            <person name="Fujii Y."/>
            <person name="Ozaki K."/>
            <person name="Hirao M."/>
            <person name="Ohmori Y."/>
            <person name="Kawabata A."/>
            <person name="Hikiji T."/>
            <person name="Kobatake N."/>
            <person name="Inagaki H."/>
            <person name="Ikema Y."/>
            <person name="Okamoto S."/>
            <person name="Okitani R."/>
            <person name="Kawakami T."/>
            <person name="Noguchi S."/>
            <person name="Itoh T."/>
            <person name="Shigeta K."/>
            <person name="Senba T."/>
            <person name="Matsumura K."/>
            <person name="Nakajima Y."/>
            <person name="Mizuno T."/>
            <person name="Morinaga M."/>
            <person name="Sasaki M."/>
            <person name="Togashi T."/>
            <person name="Oyama M."/>
            <person name="Hata H."/>
            <person name="Watanabe M."/>
            <person name="Komatsu T."/>
            <person name="Mizushima-Sugano J."/>
            <person name="Satoh T."/>
            <person name="Shirai Y."/>
            <person name="Takahashi Y."/>
            <person name="Nakagawa K."/>
            <person name="Okumura K."/>
            <person name="Nagase T."/>
            <person name="Nomura N."/>
            <person name="Kikuchi H."/>
            <person name="Masuho Y."/>
            <person name="Yamashita R."/>
            <person name="Nakai K."/>
            <person name="Yada T."/>
            <person name="Nakamura Y."/>
            <person name="Ohara O."/>
            <person name="Isogai T."/>
            <person name="Sugano S."/>
        </authorList>
    </citation>
    <scope>NUCLEOTIDE SEQUENCE [LARGE SCALE MRNA] (ISOFORM 2)</scope>
    <scope>NUCLEOTIDE SEQUENCE [LARGE SCALE MRNA] OF 45-812 (ISOFORM 3)</scope>
    <source>
        <tissue>Brain</tissue>
        <tissue>Testis</tissue>
    </source>
</reference>
<reference key="2">
    <citation type="journal article" date="2006" name="Nature">
        <title>The DNA sequence and biological annotation of human chromosome 1.</title>
        <authorList>
            <person name="Gregory S.G."/>
            <person name="Barlow K.F."/>
            <person name="McLay K.E."/>
            <person name="Kaul R."/>
            <person name="Swarbreck D."/>
            <person name="Dunham A."/>
            <person name="Scott C.E."/>
            <person name="Howe K.L."/>
            <person name="Woodfine K."/>
            <person name="Spencer C.C.A."/>
            <person name="Jones M.C."/>
            <person name="Gillson C."/>
            <person name="Searle S."/>
            <person name="Zhou Y."/>
            <person name="Kokocinski F."/>
            <person name="McDonald L."/>
            <person name="Evans R."/>
            <person name="Phillips K."/>
            <person name="Atkinson A."/>
            <person name="Cooper R."/>
            <person name="Jones C."/>
            <person name="Hall R.E."/>
            <person name="Andrews T.D."/>
            <person name="Lloyd C."/>
            <person name="Ainscough R."/>
            <person name="Almeida J.P."/>
            <person name="Ambrose K.D."/>
            <person name="Anderson F."/>
            <person name="Andrew R.W."/>
            <person name="Ashwell R.I.S."/>
            <person name="Aubin K."/>
            <person name="Babbage A.K."/>
            <person name="Bagguley C.L."/>
            <person name="Bailey J."/>
            <person name="Beasley H."/>
            <person name="Bethel G."/>
            <person name="Bird C.P."/>
            <person name="Bray-Allen S."/>
            <person name="Brown J.Y."/>
            <person name="Brown A.J."/>
            <person name="Buckley D."/>
            <person name="Burton J."/>
            <person name="Bye J."/>
            <person name="Carder C."/>
            <person name="Chapman J.C."/>
            <person name="Clark S.Y."/>
            <person name="Clarke G."/>
            <person name="Clee C."/>
            <person name="Cobley V."/>
            <person name="Collier R.E."/>
            <person name="Corby N."/>
            <person name="Coville G.J."/>
            <person name="Davies J."/>
            <person name="Deadman R."/>
            <person name="Dunn M."/>
            <person name="Earthrowl M."/>
            <person name="Ellington A.G."/>
            <person name="Errington H."/>
            <person name="Frankish A."/>
            <person name="Frankland J."/>
            <person name="French L."/>
            <person name="Garner P."/>
            <person name="Garnett J."/>
            <person name="Gay L."/>
            <person name="Ghori M.R.J."/>
            <person name="Gibson R."/>
            <person name="Gilby L.M."/>
            <person name="Gillett W."/>
            <person name="Glithero R.J."/>
            <person name="Grafham D.V."/>
            <person name="Griffiths C."/>
            <person name="Griffiths-Jones S."/>
            <person name="Grocock R."/>
            <person name="Hammond S."/>
            <person name="Harrison E.S.I."/>
            <person name="Hart E."/>
            <person name="Haugen E."/>
            <person name="Heath P.D."/>
            <person name="Holmes S."/>
            <person name="Holt K."/>
            <person name="Howden P.J."/>
            <person name="Hunt A.R."/>
            <person name="Hunt S.E."/>
            <person name="Hunter G."/>
            <person name="Isherwood J."/>
            <person name="James R."/>
            <person name="Johnson C."/>
            <person name="Johnson D."/>
            <person name="Joy A."/>
            <person name="Kay M."/>
            <person name="Kershaw J.K."/>
            <person name="Kibukawa M."/>
            <person name="Kimberley A.M."/>
            <person name="King A."/>
            <person name="Knights A.J."/>
            <person name="Lad H."/>
            <person name="Laird G."/>
            <person name="Lawlor S."/>
            <person name="Leongamornlert D.A."/>
            <person name="Lloyd D.M."/>
            <person name="Loveland J."/>
            <person name="Lovell J."/>
            <person name="Lush M.J."/>
            <person name="Lyne R."/>
            <person name="Martin S."/>
            <person name="Mashreghi-Mohammadi M."/>
            <person name="Matthews L."/>
            <person name="Matthews N.S.W."/>
            <person name="McLaren S."/>
            <person name="Milne S."/>
            <person name="Mistry S."/>
            <person name="Moore M.J.F."/>
            <person name="Nickerson T."/>
            <person name="O'Dell C.N."/>
            <person name="Oliver K."/>
            <person name="Palmeiri A."/>
            <person name="Palmer S.A."/>
            <person name="Parker A."/>
            <person name="Patel D."/>
            <person name="Pearce A.V."/>
            <person name="Peck A.I."/>
            <person name="Pelan S."/>
            <person name="Phelps K."/>
            <person name="Phillimore B.J."/>
            <person name="Plumb R."/>
            <person name="Rajan J."/>
            <person name="Raymond C."/>
            <person name="Rouse G."/>
            <person name="Saenphimmachak C."/>
            <person name="Sehra H.K."/>
            <person name="Sheridan E."/>
            <person name="Shownkeen R."/>
            <person name="Sims S."/>
            <person name="Skuce C.D."/>
            <person name="Smith M."/>
            <person name="Steward C."/>
            <person name="Subramanian S."/>
            <person name="Sycamore N."/>
            <person name="Tracey A."/>
            <person name="Tromans A."/>
            <person name="Van Helmond Z."/>
            <person name="Wall M."/>
            <person name="Wallis J.M."/>
            <person name="White S."/>
            <person name="Whitehead S.L."/>
            <person name="Wilkinson J.E."/>
            <person name="Willey D.L."/>
            <person name="Williams H."/>
            <person name="Wilming L."/>
            <person name="Wray P.W."/>
            <person name="Wu Z."/>
            <person name="Coulson A."/>
            <person name="Vaudin M."/>
            <person name="Sulston J.E."/>
            <person name="Durbin R.M."/>
            <person name="Hubbard T."/>
            <person name="Wooster R."/>
            <person name="Dunham I."/>
            <person name="Carter N.P."/>
            <person name="McVean G."/>
            <person name="Ross M.T."/>
            <person name="Harrow J."/>
            <person name="Olson M.V."/>
            <person name="Beck S."/>
            <person name="Rogers J."/>
            <person name="Bentley D.R."/>
        </authorList>
    </citation>
    <scope>NUCLEOTIDE SEQUENCE [LARGE SCALE GENOMIC DNA]</scope>
</reference>
<reference key="3">
    <citation type="submission" date="2005-09" db="EMBL/GenBank/DDBJ databases">
        <authorList>
            <person name="Mural R.J."/>
            <person name="Istrail S."/>
            <person name="Sutton G.G."/>
            <person name="Florea L."/>
            <person name="Halpern A.L."/>
            <person name="Mobarry C.M."/>
            <person name="Lippert R."/>
            <person name="Walenz B."/>
            <person name="Shatkay H."/>
            <person name="Dew I."/>
            <person name="Miller J.R."/>
            <person name="Flanigan M.J."/>
            <person name="Edwards N.J."/>
            <person name="Bolanos R."/>
            <person name="Fasulo D."/>
            <person name="Halldorsson B.V."/>
            <person name="Hannenhalli S."/>
            <person name="Turner R."/>
            <person name="Yooseph S."/>
            <person name="Lu F."/>
            <person name="Nusskern D.R."/>
            <person name="Shue B.C."/>
            <person name="Zheng X.H."/>
            <person name="Zhong F."/>
            <person name="Delcher A.L."/>
            <person name="Huson D.H."/>
            <person name="Kravitz S.A."/>
            <person name="Mouchard L."/>
            <person name="Reinert K."/>
            <person name="Remington K.A."/>
            <person name="Clark A.G."/>
            <person name="Waterman M.S."/>
            <person name="Eichler E.E."/>
            <person name="Adams M.D."/>
            <person name="Hunkapiller M.W."/>
            <person name="Myers E.W."/>
            <person name="Venter J.C."/>
        </authorList>
    </citation>
    <scope>NUCLEOTIDE SEQUENCE [LARGE SCALE GENOMIC DNA]</scope>
</reference>
<reference key="4">
    <citation type="journal article" date="2004" name="Genome Res.">
        <title>The status, quality, and expansion of the NIH full-length cDNA project: the Mammalian Gene Collection (MGC).</title>
        <authorList>
            <consortium name="The MGC Project Team"/>
        </authorList>
    </citation>
    <scope>NUCLEOTIDE SEQUENCE [LARGE SCALE MRNA] (ISOFORM 2)</scope>
    <scope>VARIANT ILE-609</scope>
    <source>
        <tissue>Brain</tissue>
        <tissue>Pancreas</tissue>
    </source>
</reference>
<reference key="5">
    <citation type="journal article" date="2007" name="BMC Genomics">
        <title>The full-ORF clone resource of the German cDNA consortium.</title>
        <authorList>
            <person name="Bechtel S."/>
            <person name="Rosenfelder H."/>
            <person name="Duda A."/>
            <person name="Schmidt C.P."/>
            <person name="Ernst U."/>
            <person name="Wellenreuther R."/>
            <person name="Mehrle A."/>
            <person name="Schuster C."/>
            <person name="Bahr A."/>
            <person name="Bloecker H."/>
            <person name="Heubner D."/>
            <person name="Hoerlein A."/>
            <person name="Michel G."/>
            <person name="Wedler H."/>
            <person name="Koehrer K."/>
            <person name="Ottenwaelder B."/>
            <person name="Poustka A."/>
            <person name="Wiemann S."/>
            <person name="Schupp I."/>
        </authorList>
    </citation>
    <scope>NUCLEOTIDE SEQUENCE [LARGE SCALE MRNA] OF 17-812 (ISOFORM 2)</scope>
    <scope>VARIANT ILE-609</scope>
    <source>
        <tissue>Endometrium</tissue>
    </source>
</reference>
<reference key="6">
    <citation type="journal article" date="2004" name="Proc. Natl. Acad. Sci. U.S.A.">
        <title>Large-scale cDNA transfection screening for genes related to cancer development and progression.</title>
        <authorList>
            <person name="Wan D."/>
            <person name="Gong Y."/>
            <person name="Qin W."/>
            <person name="Zhang P."/>
            <person name="Li J."/>
            <person name="Wei L."/>
            <person name="Zhou X."/>
            <person name="Li H."/>
            <person name="Qiu X."/>
            <person name="Zhong F."/>
            <person name="He L."/>
            <person name="Yu J."/>
            <person name="Yao G."/>
            <person name="Jiang H."/>
            <person name="Qian L."/>
            <person name="Yu Y."/>
            <person name="Shu H."/>
            <person name="Chen X."/>
            <person name="Xu H."/>
            <person name="Guo M."/>
            <person name="Pan Z."/>
            <person name="Chen Y."/>
            <person name="Ge C."/>
            <person name="Yang S."/>
            <person name="Gu J."/>
        </authorList>
    </citation>
    <scope>NUCLEOTIDE SEQUENCE [LARGE SCALE MRNA] OF 21-812 (ISOFORM 2)</scope>
</reference>
<reference key="7">
    <citation type="submission" date="1995-03" db="EMBL/GenBank/DDBJ databases">
        <authorList>
            <person name="Kreideweiss S."/>
            <person name="Delany-Heiken P."/>
            <person name="Nordheim A."/>
            <person name="Ruhlmann A.C.C."/>
        </authorList>
    </citation>
    <scope>NUCLEOTIDE SEQUENCE [MRNA] OF 249-812 (ISOFORM 2)</scope>
    <source>
        <tissue>Tonsil</tissue>
    </source>
</reference>
<reference key="8">
    <citation type="journal article" date="2001" name="J. Biol. Chem.">
        <title>Muf1, a novel elongin BC-interacting leucine-rich repeat protein that can assemble with Cul5 and Rbx1 to reconstitute a ubiquitin ligase.</title>
        <authorList>
            <person name="Kamura T."/>
            <person name="Burian D."/>
            <person name="Yan Q."/>
            <person name="Schmidt S.L."/>
            <person name="Lane W.S."/>
            <person name="Querido E."/>
            <person name="Branton P.E."/>
            <person name="Shilatifard A."/>
            <person name="Conaway R.C."/>
            <person name="Conaway J.W."/>
        </authorList>
    </citation>
    <scope>IDENTIFICATION IN E3 UBIQUITIN-PROTEIN LIGASE COMPLEX WITH CUL5</scope>
</reference>
<reference key="9">
    <citation type="journal article" date="2004" name="Genes Dev.">
        <title>VHL-box and SOCS-box domains determine binding specificity for Cul2-Rbx1 and Cul5-Rbx2 modules of ubiquitin ligases.</title>
        <authorList>
            <person name="Kamura T."/>
            <person name="Maenaka K."/>
            <person name="Kotoshiba S."/>
            <person name="Matsumoto M."/>
            <person name="Kohda D."/>
            <person name="Conaway R.C."/>
            <person name="Conaway J.W."/>
            <person name="Nakayama K.I."/>
        </authorList>
    </citation>
    <scope>FUNCTION IN AN E3 UBIQUITIN LIGASE COMPLEX</scope>
    <scope>IDENTIFICATION BY MASS SPECTROMETRY</scope>
    <scope>INTERACTION WITH CUL5; RNF7; ELOB AND ELOC</scope>
</reference>
<reference key="10">
    <citation type="journal article" date="2006" name="Cell">
        <title>Global, in vivo, and site-specific phosphorylation dynamics in signaling networks.</title>
        <authorList>
            <person name="Olsen J.V."/>
            <person name="Blagoev B."/>
            <person name="Gnad F."/>
            <person name="Macek B."/>
            <person name="Kumar C."/>
            <person name="Mortensen P."/>
            <person name="Mann M."/>
        </authorList>
    </citation>
    <scope>PHOSPHORYLATION [LARGE SCALE ANALYSIS] AT SER-276</scope>
    <scope>IDENTIFICATION BY MASS SPECTROMETRY [LARGE SCALE ANALYSIS]</scope>
    <source>
        <tissue>Cervix carcinoma</tissue>
    </source>
</reference>
<reference key="11">
    <citation type="journal article" date="2007" name="Science">
        <title>ATM and ATR substrate analysis reveals extensive protein networks responsive to DNA damage.</title>
        <authorList>
            <person name="Matsuoka S."/>
            <person name="Ballif B.A."/>
            <person name="Smogorzewska A."/>
            <person name="McDonald E.R. III"/>
            <person name="Hurov K.E."/>
            <person name="Luo J."/>
            <person name="Bakalarski C.E."/>
            <person name="Zhao Z."/>
            <person name="Solimini N."/>
            <person name="Lerenthal Y."/>
            <person name="Shiloh Y."/>
            <person name="Gygi S.P."/>
            <person name="Elledge S.J."/>
        </authorList>
    </citation>
    <scope>PHOSPHORYLATION [LARGE SCALE ANALYSIS] AT THR-327</scope>
    <scope>IDENTIFICATION BY MASS SPECTROMETRY [LARGE SCALE ANALYSIS]</scope>
    <source>
        <tissue>Embryonic kidney</tissue>
    </source>
</reference>
<reference key="12">
    <citation type="journal article" date="2008" name="Proc. Natl. Acad. Sci. U.S.A.">
        <title>A quantitative atlas of mitotic phosphorylation.</title>
        <authorList>
            <person name="Dephoure N."/>
            <person name="Zhou C."/>
            <person name="Villen J."/>
            <person name="Beausoleil S.A."/>
            <person name="Bakalarski C.E."/>
            <person name="Elledge S.J."/>
            <person name="Gygi S.P."/>
        </authorList>
    </citation>
    <scope>PHOSPHORYLATION [LARGE SCALE ANALYSIS] AT SER-357</scope>
    <scope>IDENTIFICATION BY MASS SPECTROMETRY [LARGE SCALE ANALYSIS]</scope>
    <source>
        <tissue>Cervix carcinoma</tissue>
    </source>
</reference>
<reference key="13">
    <citation type="journal article" date="2011" name="BMC Syst. Biol.">
        <title>Initial characterization of the human central proteome.</title>
        <authorList>
            <person name="Burkard T.R."/>
            <person name="Planyavsky M."/>
            <person name="Kaupe I."/>
            <person name="Breitwieser F.P."/>
            <person name="Buerckstuemmer T."/>
            <person name="Bennett K.L."/>
            <person name="Superti-Furga G."/>
            <person name="Colinge J."/>
        </authorList>
    </citation>
    <scope>IDENTIFICATION BY MASS SPECTROMETRY [LARGE SCALE ANALYSIS]</scope>
</reference>
<reference key="14">
    <citation type="journal article" date="2013" name="J. Proteome Res.">
        <title>Toward a comprehensive characterization of a human cancer cell phosphoproteome.</title>
        <authorList>
            <person name="Zhou H."/>
            <person name="Di Palma S."/>
            <person name="Preisinger C."/>
            <person name="Peng M."/>
            <person name="Polat A.N."/>
            <person name="Heck A.J."/>
            <person name="Mohammed S."/>
        </authorList>
    </citation>
    <scope>PHOSPHORYLATION [LARGE SCALE ANALYSIS] AT SER-155; SER-276; SER-326; THR-327; SER-357 AND SER-373</scope>
    <scope>IDENTIFICATION BY MASS SPECTROMETRY [LARGE SCALE ANALYSIS]</scope>
    <source>
        <tissue>Cervix carcinoma</tissue>
        <tissue>Erythroleukemia</tissue>
    </source>
</reference>
<reference key="15">
    <citation type="journal article" date="2014" name="J. Proteomics">
        <title>An enzyme assisted RP-RPLC approach for in-depth analysis of human liver phosphoproteome.</title>
        <authorList>
            <person name="Bian Y."/>
            <person name="Song C."/>
            <person name="Cheng K."/>
            <person name="Dong M."/>
            <person name="Wang F."/>
            <person name="Huang J."/>
            <person name="Sun D."/>
            <person name="Wang L."/>
            <person name="Ye M."/>
            <person name="Zou H."/>
        </authorList>
    </citation>
    <scope>IDENTIFICATION BY MASS SPECTROMETRY [LARGE SCALE ANALYSIS]</scope>
    <source>
        <tissue>Liver</tissue>
    </source>
</reference>